<sequence>MARFAGVDIPNEKRIVISLTYVFGVGLQTSKKVLAAAGVSEDIRTKDLTSDQEDAIRRELDGLKLEGDLRREVSLNIKRLMEIGSYRGMRHRRGLPTRGQNTKNNARTRKGPAKSIAGKKK</sequence>
<accession>P0A4A9</accession>
<accession>P27147</accession>
<evidence type="ECO:0000255" key="1">
    <source>
        <dbReference type="HAMAP-Rule" id="MF_01315"/>
    </source>
</evidence>
<evidence type="ECO:0000256" key="2">
    <source>
        <dbReference type="SAM" id="MobiDB-lite"/>
    </source>
</evidence>
<evidence type="ECO:0000305" key="3"/>
<feature type="chain" id="PRO_0000132098" description="Small ribosomal subunit protein uS13">
    <location>
        <begin position="1"/>
        <end position="121"/>
    </location>
</feature>
<feature type="region of interest" description="Disordered" evidence="2">
    <location>
        <begin position="88"/>
        <end position="121"/>
    </location>
</feature>
<feature type="compositionally biased region" description="Basic residues" evidence="2">
    <location>
        <begin position="106"/>
        <end position="121"/>
    </location>
</feature>
<name>RS13_LACLA</name>
<protein>
    <recommendedName>
        <fullName evidence="1">Small ribosomal subunit protein uS13</fullName>
    </recommendedName>
    <alternativeName>
        <fullName evidence="3">30S ribosomal protein S13</fullName>
    </alternativeName>
</protein>
<dbReference type="EMBL" id="AE005176">
    <property type="protein sequence ID" value="AAK06168.1"/>
    <property type="molecule type" value="Genomic_DNA"/>
</dbReference>
<dbReference type="PIR" id="F86883">
    <property type="entry name" value="F86883"/>
</dbReference>
<dbReference type="RefSeq" id="NP_268227.1">
    <property type="nucleotide sequence ID" value="NC_002662.1"/>
</dbReference>
<dbReference type="RefSeq" id="WP_003130555.1">
    <property type="nucleotide sequence ID" value="NC_002662.1"/>
</dbReference>
<dbReference type="SMR" id="P0A4A9"/>
<dbReference type="PaxDb" id="272623-L0390"/>
<dbReference type="EnsemblBacteria" id="AAK06168">
    <property type="protein sequence ID" value="AAK06168"/>
    <property type="gene ID" value="L0390"/>
</dbReference>
<dbReference type="GeneID" id="89634422"/>
<dbReference type="KEGG" id="lla:L0390"/>
<dbReference type="PATRIC" id="fig|272623.7.peg.2229"/>
<dbReference type="eggNOG" id="COG0099">
    <property type="taxonomic scope" value="Bacteria"/>
</dbReference>
<dbReference type="HOGENOM" id="CLU_103849_1_1_9"/>
<dbReference type="OrthoDB" id="9803610at2"/>
<dbReference type="Proteomes" id="UP000002196">
    <property type="component" value="Chromosome"/>
</dbReference>
<dbReference type="GO" id="GO:0005829">
    <property type="term" value="C:cytosol"/>
    <property type="evidence" value="ECO:0007669"/>
    <property type="project" value="TreeGrafter"/>
</dbReference>
<dbReference type="GO" id="GO:0015935">
    <property type="term" value="C:small ribosomal subunit"/>
    <property type="evidence" value="ECO:0007669"/>
    <property type="project" value="TreeGrafter"/>
</dbReference>
<dbReference type="GO" id="GO:0019843">
    <property type="term" value="F:rRNA binding"/>
    <property type="evidence" value="ECO:0007669"/>
    <property type="project" value="UniProtKB-UniRule"/>
</dbReference>
<dbReference type="GO" id="GO:0003735">
    <property type="term" value="F:structural constituent of ribosome"/>
    <property type="evidence" value="ECO:0007669"/>
    <property type="project" value="InterPro"/>
</dbReference>
<dbReference type="GO" id="GO:0000049">
    <property type="term" value="F:tRNA binding"/>
    <property type="evidence" value="ECO:0007669"/>
    <property type="project" value="UniProtKB-UniRule"/>
</dbReference>
<dbReference type="GO" id="GO:0006412">
    <property type="term" value="P:translation"/>
    <property type="evidence" value="ECO:0007669"/>
    <property type="project" value="UniProtKB-UniRule"/>
</dbReference>
<dbReference type="FunFam" id="1.10.8.50:FF:000001">
    <property type="entry name" value="30S ribosomal protein S13"/>
    <property type="match status" value="1"/>
</dbReference>
<dbReference type="FunFam" id="4.10.910.10:FF:000001">
    <property type="entry name" value="30S ribosomal protein S13"/>
    <property type="match status" value="1"/>
</dbReference>
<dbReference type="Gene3D" id="1.10.8.50">
    <property type="match status" value="1"/>
</dbReference>
<dbReference type="Gene3D" id="4.10.910.10">
    <property type="entry name" value="30s ribosomal protein s13, domain 2"/>
    <property type="match status" value="1"/>
</dbReference>
<dbReference type="HAMAP" id="MF_01315">
    <property type="entry name" value="Ribosomal_uS13"/>
    <property type="match status" value="1"/>
</dbReference>
<dbReference type="InterPro" id="IPR027437">
    <property type="entry name" value="Rbsml_uS13_C"/>
</dbReference>
<dbReference type="InterPro" id="IPR001892">
    <property type="entry name" value="Ribosomal_uS13"/>
</dbReference>
<dbReference type="InterPro" id="IPR010979">
    <property type="entry name" value="Ribosomal_uS13-like_H2TH"/>
</dbReference>
<dbReference type="InterPro" id="IPR019980">
    <property type="entry name" value="Ribosomal_uS13_bac-type"/>
</dbReference>
<dbReference type="InterPro" id="IPR018269">
    <property type="entry name" value="Ribosomal_uS13_CS"/>
</dbReference>
<dbReference type="NCBIfam" id="TIGR03631">
    <property type="entry name" value="uS13_bact"/>
    <property type="match status" value="1"/>
</dbReference>
<dbReference type="PANTHER" id="PTHR10871">
    <property type="entry name" value="30S RIBOSOMAL PROTEIN S13/40S RIBOSOMAL PROTEIN S18"/>
    <property type="match status" value="1"/>
</dbReference>
<dbReference type="PANTHER" id="PTHR10871:SF1">
    <property type="entry name" value="SMALL RIBOSOMAL SUBUNIT PROTEIN US13M"/>
    <property type="match status" value="1"/>
</dbReference>
<dbReference type="Pfam" id="PF00416">
    <property type="entry name" value="Ribosomal_S13"/>
    <property type="match status" value="1"/>
</dbReference>
<dbReference type="PIRSF" id="PIRSF002134">
    <property type="entry name" value="Ribosomal_S13"/>
    <property type="match status" value="1"/>
</dbReference>
<dbReference type="SUPFAM" id="SSF46946">
    <property type="entry name" value="S13-like H2TH domain"/>
    <property type="match status" value="1"/>
</dbReference>
<dbReference type="PROSITE" id="PS00646">
    <property type="entry name" value="RIBOSOMAL_S13_1"/>
    <property type="match status" value="1"/>
</dbReference>
<dbReference type="PROSITE" id="PS50159">
    <property type="entry name" value="RIBOSOMAL_S13_2"/>
    <property type="match status" value="1"/>
</dbReference>
<proteinExistence type="inferred from homology"/>
<keyword id="KW-1185">Reference proteome</keyword>
<keyword id="KW-0687">Ribonucleoprotein</keyword>
<keyword id="KW-0689">Ribosomal protein</keyword>
<keyword id="KW-0694">RNA-binding</keyword>
<keyword id="KW-0699">rRNA-binding</keyword>
<keyword id="KW-0820">tRNA-binding</keyword>
<reference key="1">
    <citation type="journal article" date="2001" name="Genome Res.">
        <title>The complete genome sequence of the lactic acid bacterium Lactococcus lactis ssp. lactis IL1403.</title>
        <authorList>
            <person name="Bolotin A."/>
            <person name="Wincker P."/>
            <person name="Mauger S."/>
            <person name="Jaillon O."/>
            <person name="Malarme K."/>
            <person name="Weissenbach J."/>
            <person name="Ehrlich S.D."/>
            <person name="Sorokin A."/>
        </authorList>
    </citation>
    <scope>NUCLEOTIDE SEQUENCE [LARGE SCALE GENOMIC DNA]</scope>
    <source>
        <strain>IL1403</strain>
    </source>
</reference>
<comment type="function">
    <text evidence="1">Located at the top of the head of the 30S subunit, it contacts several helices of the 16S rRNA. In the 70S ribosome it contacts the 23S rRNA (bridge B1a) and protein L5 of the 50S subunit (bridge B1b), connecting the 2 subunits; these bridges are implicated in subunit movement. Contacts the tRNAs in the A and P-sites.</text>
</comment>
<comment type="subunit">
    <text evidence="1">Part of the 30S ribosomal subunit. Forms a loose heterodimer with protein S19. Forms two bridges to the 50S subunit in the 70S ribosome.</text>
</comment>
<comment type="similarity">
    <text evidence="1">Belongs to the universal ribosomal protein uS13 family.</text>
</comment>
<organism>
    <name type="scientific">Lactococcus lactis subsp. lactis (strain IL1403)</name>
    <name type="common">Streptococcus lactis</name>
    <dbReference type="NCBI Taxonomy" id="272623"/>
    <lineage>
        <taxon>Bacteria</taxon>
        <taxon>Bacillati</taxon>
        <taxon>Bacillota</taxon>
        <taxon>Bacilli</taxon>
        <taxon>Lactobacillales</taxon>
        <taxon>Streptococcaceae</taxon>
        <taxon>Lactococcus</taxon>
    </lineage>
</organism>
<gene>
    <name evidence="1" type="primary">rpsM</name>
    <name type="ordered locus">LL2070</name>
    <name type="ORF">L0390</name>
</gene>